<name>PSBY_THEVB</name>
<evidence type="ECO:0000255" key="1">
    <source>
        <dbReference type="HAMAP-Rule" id="MF_00717"/>
    </source>
</evidence>
<evidence type="ECO:0000269" key="2">
    <source>
    </source>
</evidence>
<evidence type="ECO:0000269" key="3">
    <source>
    </source>
</evidence>
<evidence type="ECO:0000269" key="4">
    <source>
    </source>
</evidence>
<evidence type="ECO:0000269" key="5">
    <source>
    </source>
</evidence>
<evidence type="ECO:0000303" key="6">
    <source>
    </source>
</evidence>
<evidence type="ECO:0000305" key="7"/>
<evidence type="ECO:0007829" key="8">
    <source>
        <dbReference type="PDB" id="7YQ2"/>
    </source>
</evidence>
<accession>Q8DKM3</accession>
<reference key="1">
    <citation type="journal article" date="2002" name="DNA Res.">
        <title>Complete genome structure of the thermophilic cyanobacterium Thermosynechococcus elongatus BP-1.</title>
        <authorList>
            <person name="Nakamura Y."/>
            <person name="Kaneko T."/>
            <person name="Sato S."/>
            <person name="Ikeuchi M."/>
            <person name="Katoh H."/>
            <person name="Sasamoto S."/>
            <person name="Watanabe A."/>
            <person name="Iriguchi M."/>
            <person name="Kawashima K."/>
            <person name="Kimura T."/>
            <person name="Kishida Y."/>
            <person name="Kiyokawa C."/>
            <person name="Kohara M."/>
            <person name="Matsumoto M."/>
            <person name="Matsuno A."/>
            <person name="Nakazaki N."/>
            <person name="Shimpo S."/>
            <person name="Sugimoto M."/>
            <person name="Takeuchi C."/>
            <person name="Yamada M."/>
            <person name="Tabata S."/>
        </authorList>
    </citation>
    <scope>NUCLEOTIDE SEQUENCE [LARGE SCALE GENOMIC DNA]</scope>
    <source>
        <strain>NIES-2133 / IAM M-273 / BP-1</strain>
    </source>
</reference>
<reference key="2">
    <citation type="journal article" date="2007" name="Biochim. Biophys. Acta">
        <title>Ycf12 is a core subunit in the photosystem II complex.</title>
        <authorList>
            <person name="Kashino Y."/>
            <person name="Takahashi T."/>
            <person name="Inoue-Kashino N."/>
            <person name="Ban A."/>
            <person name="Ikeda Y."/>
            <person name="Satoh K."/>
            <person name="Sugiura M."/>
        </authorList>
    </citation>
    <scope>PROTEIN SEQUENCE OF 1-15</scope>
    <scope>COFACTOR</scope>
    <scope>SUBCELLULAR LOCATION</scope>
</reference>
<reference key="3">
    <citation type="journal article" date="2007" name="FEBS Lett.">
        <title>Location of PsbY in oxygen-evolving photosystem II revealed by mutagenesis and X-ray crystallography.</title>
        <authorList>
            <person name="Kawakami K."/>
            <person name="Iwai M."/>
            <person name="Ikeuchi M."/>
            <person name="Kamiya N."/>
            <person name="Shen J.R."/>
        </authorList>
    </citation>
    <scope>PRESENCE IN PHOTOSYSTEM II</scope>
    <scope>FUNCTION</scope>
    <scope>SUBCELLULAR LOCATION</scope>
    <scope>DISRUPTION PHENOTYPE</scope>
    <scope>TOPOLOGY</scope>
</reference>
<reference key="4">
    <citation type="journal article" date="2009" name="Nat. Struct. Mol. Biol.">
        <title>Cyanobacterial photosystem II at 2.9-A resolution and the role of quinones, lipids, channels and chloride.</title>
        <authorList>
            <person name="Guskov A."/>
            <person name="Kern J."/>
            <person name="Gabdulkhakov A."/>
            <person name="Broser M."/>
            <person name="Zouni A."/>
            <person name="Saenger W."/>
        </authorList>
    </citation>
    <scope>PRESENCE IN PHOTOSYSTEM II</scope>
    <scope>COFACTOR</scope>
    <scope>SUBUNIT</scope>
    <scope>SUBCELLULAR LOCATION</scope>
    <scope>FORMYLATION AT MET-1</scope>
    <scope>MASS SPECTROMETRY</scope>
    <scope>TOPOLOGY</scope>
    <source>
        <strain>NIES-2133 / IAM M-273 / BP-1</strain>
    </source>
</reference>
<reference key="5">
    <citation type="journal article" date="2010" name="J. Biol. Chem.">
        <title>Crystal structure of monomeric photosystem II from Thermosynechococcus elongatus at 3.6 A resolution.</title>
        <authorList>
            <person name="Broser M."/>
            <person name="Gabdulkhakov A."/>
            <person name="Kern J."/>
            <person name="Guskov A."/>
            <person name="Muh F."/>
            <person name="Saenger W."/>
            <person name="Zouni A."/>
        </authorList>
    </citation>
    <scope>PRESENCE IN PHOTOSYSTEM II</scope>
    <scope>FUNCTION</scope>
    <scope>COFACTOR</scope>
    <scope>SUBUNIT</scope>
    <scope>SUBCELLULAR LOCATION</scope>
    <scope>FORMYLATION AT MET-1</scope>
    <scope>MASS SPECTROMETRY</scope>
    <source>
        <strain>NIES-2133 / IAM M-273 / BP-1</strain>
    </source>
</reference>
<gene>
    <name evidence="1" type="primary">psbY</name>
    <name type="ordered locus">tsl0836</name>
</gene>
<comment type="function">
    <text evidence="1 2 4 5 6">Loosely associated component of the core of photosystem II, it is not always seen in crystals. PSII is a light-driven water plastoquinone oxidoreductase, using light energy to abstract electrons from H(2)O, generating a proton gradient subsequently used for ATP formation.</text>
</comment>
<comment type="cofactor">
    <text evidence="3 4 5">PSII binds multiple chlorophylls, carotenoids and specific lipids.</text>
</comment>
<comment type="subunit">
    <text evidence="1 2 3 4 5">PSII is composed of 1 copy each of membrane proteins PsbA, PsbB, PsbC, PsbD, PsbE, PsbF, PsbH, PsbI, PsbJ, PsbK, PsbL, PsbM, PsbT, PsbX, PsbY, PsbZ, Psb30/Ycf12, peripheral proteins PsbO, CyanoQ (PsbQ), PsbU, PsbV and a large number of cofactors. It forms dimeric complexes. This protein is only loosely associated with PSII, and is not often found in crystals. Found on the exterior of the PSII dimer, near cytochrome b559 (psbE and psbF) (PubMed:17910960).</text>
</comment>
<comment type="subcellular location">
    <subcellularLocation>
        <location evidence="1 3 4 5">Cellular thylakoid membrane</location>
        <topology evidence="1 3 4 5">Single-pass membrane protein</topology>
    </subcellularLocation>
</comment>
<comment type="mass spectrometry" mass="4617.0" error="4.0" method="MALDI" evidence="4"/>
<comment type="mass spectrometry" mass="4614.0" method="MALDI" evidence="5"/>
<comment type="disruption phenotype">
    <text evidence="2">No visible growth phenotype, PSII forms dimers, slightly reduced oxygen evolving activity in vitro.</text>
</comment>
<comment type="similarity">
    <text evidence="1">Belongs to the PsbY family.</text>
</comment>
<comment type="sequence caution" evidence="7">
    <conflict type="erroneous initiation">
        <sequence resource="EMBL-CDS" id="BAC08388"/>
    </conflict>
    <text>Extended N-terminus.</text>
</comment>
<proteinExistence type="evidence at protein level"/>
<dbReference type="EMBL" id="BA000039">
    <property type="protein sequence ID" value="BAC08388.1"/>
    <property type="status" value="ALT_INIT"/>
    <property type="molecule type" value="Genomic_DNA"/>
</dbReference>
<dbReference type="RefSeq" id="NP_681626.1">
    <property type="nucleotide sequence ID" value="NC_004113.1"/>
</dbReference>
<dbReference type="RefSeq" id="WP_011056680.1">
    <property type="nucleotide sequence ID" value="NC_004113.1"/>
</dbReference>
<dbReference type="PDB" id="4PJ0">
    <property type="method" value="X-ray"/>
    <property type="resolution" value="2.44 A"/>
    <property type="chains" value="R/r=1-41"/>
</dbReference>
<dbReference type="PDB" id="5KAF">
    <property type="method" value="X-ray"/>
    <property type="resolution" value="3.00 A"/>
    <property type="chains" value="R/r=1-41"/>
</dbReference>
<dbReference type="PDB" id="5KAI">
    <property type="method" value="X-ray"/>
    <property type="resolution" value="2.80 A"/>
    <property type="chains" value="R/r=1-41"/>
</dbReference>
<dbReference type="PDB" id="5MX2">
    <property type="method" value="X-ray"/>
    <property type="resolution" value="2.20 A"/>
    <property type="chains" value="R/r=1-41"/>
</dbReference>
<dbReference type="PDB" id="5TIS">
    <property type="method" value="X-ray"/>
    <property type="resolution" value="2.25 A"/>
    <property type="chains" value="R/r=1-41"/>
</dbReference>
<dbReference type="PDB" id="6DHE">
    <property type="method" value="X-ray"/>
    <property type="resolution" value="2.05 A"/>
    <property type="chains" value="R/r=2-35"/>
</dbReference>
<dbReference type="PDB" id="6DHF">
    <property type="method" value="X-ray"/>
    <property type="resolution" value="2.08 A"/>
    <property type="chains" value="R/r=2-35"/>
</dbReference>
<dbReference type="PDB" id="6DHG">
    <property type="method" value="X-ray"/>
    <property type="resolution" value="2.50 A"/>
    <property type="chains" value="R/r=2-35"/>
</dbReference>
<dbReference type="PDB" id="6DHH">
    <property type="method" value="X-ray"/>
    <property type="resolution" value="2.20 A"/>
    <property type="chains" value="R/r=2-35"/>
</dbReference>
<dbReference type="PDB" id="6DHO">
    <property type="method" value="X-ray"/>
    <property type="resolution" value="2.07 A"/>
    <property type="chains" value="R/r=2-35"/>
</dbReference>
<dbReference type="PDB" id="6DHP">
    <property type="method" value="X-ray"/>
    <property type="resolution" value="2.04 A"/>
    <property type="chains" value="R/r=2-35"/>
</dbReference>
<dbReference type="PDB" id="6W1O">
    <property type="method" value="X-ray"/>
    <property type="resolution" value="2.08 A"/>
    <property type="chains" value="R/r=2-41"/>
</dbReference>
<dbReference type="PDB" id="6W1P">
    <property type="method" value="X-ray"/>
    <property type="resolution" value="2.26 A"/>
    <property type="chains" value="R/r=2-41"/>
</dbReference>
<dbReference type="PDB" id="6W1Q">
    <property type="method" value="X-ray"/>
    <property type="resolution" value="2.27 A"/>
    <property type="chains" value="R/r=1-41"/>
</dbReference>
<dbReference type="PDB" id="6W1R">
    <property type="method" value="X-ray"/>
    <property type="resolution" value="2.23 A"/>
    <property type="chains" value="R/r=2-41"/>
</dbReference>
<dbReference type="PDB" id="6W1T">
    <property type="method" value="X-ray"/>
    <property type="resolution" value="2.01 A"/>
    <property type="chains" value="R/r=2-41"/>
</dbReference>
<dbReference type="PDB" id="6W1U">
    <property type="method" value="X-ray"/>
    <property type="resolution" value="2.09 A"/>
    <property type="chains" value="R/r=1-41"/>
</dbReference>
<dbReference type="PDB" id="6W1V">
    <property type="method" value="X-ray"/>
    <property type="resolution" value="2.09 A"/>
    <property type="chains" value="R/r=1-41"/>
</dbReference>
<dbReference type="PDB" id="7RF1">
    <property type="method" value="X-ray"/>
    <property type="resolution" value="1.89 A"/>
    <property type="chains" value="R/r=1-41"/>
</dbReference>
<dbReference type="PDB" id="7RF2">
    <property type="method" value="X-ray"/>
    <property type="resolution" value="2.08 A"/>
    <property type="chains" value="R/r=1-41"/>
</dbReference>
<dbReference type="PDB" id="7RF3">
    <property type="method" value="X-ray"/>
    <property type="resolution" value="2.26 A"/>
    <property type="chains" value="R/r=1-41"/>
</dbReference>
<dbReference type="PDB" id="7RF4">
    <property type="method" value="X-ray"/>
    <property type="resolution" value="2.27 A"/>
    <property type="chains" value="R/r=1-41"/>
</dbReference>
<dbReference type="PDB" id="7RF5">
    <property type="method" value="X-ray"/>
    <property type="resolution" value="2.23 A"/>
    <property type="chains" value="R/r=1-41"/>
</dbReference>
<dbReference type="PDB" id="7RF6">
    <property type="method" value="X-ray"/>
    <property type="resolution" value="2.01 A"/>
    <property type="chains" value="R/r=1-41"/>
</dbReference>
<dbReference type="PDB" id="7RF7">
    <property type="method" value="X-ray"/>
    <property type="resolution" value="2.09 A"/>
    <property type="chains" value="R/r=1-41"/>
</dbReference>
<dbReference type="PDB" id="7RF8">
    <property type="method" value="X-ray"/>
    <property type="resolution" value="2.09 A"/>
    <property type="chains" value="R/r=1-41"/>
</dbReference>
<dbReference type="PDB" id="7YQ2">
    <property type="method" value="X-ray"/>
    <property type="resolution" value="1.90 A"/>
    <property type="chains" value="R=1-41"/>
</dbReference>
<dbReference type="PDB" id="7YQ7">
    <property type="method" value="X-ray"/>
    <property type="resolution" value="1.90 A"/>
    <property type="chains" value="R=1-41"/>
</dbReference>
<dbReference type="PDB" id="8EZ5">
    <property type="method" value="X-ray"/>
    <property type="resolution" value="2.09 A"/>
    <property type="chains" value="R/r=1-41"/>
</dbReference>
<dbReference type="PDB" id="8F4C">
    <property type="method" value="X-ray"/>
    <property type="resolution" value="2.00 A"/>
    <property type="chains" value="R/r=1-41"/>
</dbReference>
<dbReference type="PDB" id="8F4D">
    <property type="method" value="X-ray"/>
    <property type="resolution" value="2.15 A"/>
    <property type="chains" value="R/r=1-41"/>
</dbReference>
<dbReference type="PDB" id="8F4E">
    <property type="method" value="X-ray"/>
    <property type="resolution" value="2.09 A"/>
    <property type="chains" value="R/r=1-41"/>
</dbReference>
<dbReference type="PDB" id="8F4F">
    <property type="method" value="X-ray"/>
    <property type="resolution" value="2.03 A"/>
    <property type="chains" value="R/r=1-41"/>
</dbReference>
<dbReference type="PDB" id="8F4G">
    <property type="method" value="X-ray"/>
    <property type="resolution" value="2.03 A"/>
    <property type="chains" value="R/r=1-41"/>
</dbReference>
<dbReference type="PDB" id="8F4H">
    <property type="method" value="X-ray"/>
    <property type="resolution" value="2.10 A"/>
    <property type="chains" value="R/r=1-41"/>
</dbReference>
<dbReference type="PDB" id="8F4I">
    <property type="method" value="X-ray"/>
    <property type="resolution" value="2.00 A"/>
    <property type="chains" value="R/r=1-41"/>
</dbReference>
<dbReference type="PDB" id="8F4J">
    <property type="method" value="X-ray"/>
    <property type="resolution" value="2.00 A"/>
    <property type="chains" value="R/r=1-41"/>
</dbReference>
<dbReference type="PDB" id="8F4K">
    <property type="method" value="X-ray"/>
    <property type="resolution" value="2.16 A"/>
    <property type="chains" value="R/r=1-41"/>
</dbReference>
<dbReference type="PDB" id="8GN1">
    <property type="method" value="X-ray"/>
    <property type="resolution" value="2.10 A"/>
    <property type="chains" value="R=1-41"/>
</dbReference>
<dbReference type="PDB" id="8GN2">
    <property type="method" value="X-ray"/>
    <property type="resolution" value="1.95 A"/>
    <property type="chains" value="R=1-41"/>
</dbReference>
<dbReference type="PDBsum" id="4PJ0"/>
<dbReference type="PDBsum" id="5KAF"/>
<dbReference type="PDBsum" id="5KAI"/>
<dbReference type="PDBsum" id="5MX2"/>
<dbReference type="PDBsum" id="5TIS"/>
<dbReference type="PDBsum" id="6DHE"/>
<dbReference type="PDBsum" id="6DHF"/>
<dbReference type="PDBsum" id="6DHG"/>
<dbReference type="PDBsum" id="6DHH"/>
<dbReference type="PDBsum" id="6DHO"/>
<dbReference type="PDBsum" id="6DHP"/>
<dbReference type="PDBsum" id="6W1O"/>
<dbReference type="PDBsum" id="6W1P"/>
<dbReference type="PDBsum" id="6W1Q"/>
<dbReference type="PDBsum" id="6W1R"/>
<dbReference type="PDBsum" id="6W1T"/>
<dbReference type="PDBsum" id="6W1U"/>
<dbReference type="PDBsum" id="6W1V"/>
<dbReference type="PDBsum" id="7RF1"/>
<dbReference type="PDBsum" id="7RF2"/>
<dbReference type="PDBsum" id="7RF3"/>
<dbReference type="PDBsum" id="7RF4"/>
<dbReference type="PDBsum" id="7RF5"/>
<dbReference type="PDBsum" id="7RF6"/>
<dbReference type="PDBsum" id="7RF7"/>
<dbReference type="PDBsum" id="7RF8"/>
<dbReference type="PDBsum" id="7YQ2"/>
<dbReference type="PDBsum" id="7YQ7"/>
<dbReference type="PDBsum" id="8EZ5"/>
<dbReference type="PDBsum" id="8F4C"/>
<dbReference type="PDBsum" id="8F4D"/>
<dbReference type="PDBsum" id="8F4E"/>
<dbReference type="PDBsum" id="8F4F"/>
<dbReference type="PDBsum" id="8F4G"/>
<dbReference type="PDBsum" id="8F4H"/>
<dbReference type="PDBsum" id="8F4I"/>
<dbReference type="PDBsum" id="8F4J"/>
<dbReference type="PDBsum" id="8F4K"/>
<dbReference type="PDBsum" id="8GN1"/>
<dbReference type="PDBsum" id="8GN2"/>
<dbReference type="SMR" id="Q8DKM3"/>
<dbReference type="DIP" id="DIP-48506N"/>
<dbReference type="IntAct" id="Q8DKM3">
    <property type="interactions" value="2"/>
</dbReference>
<dbReference type="STRING" id="197221.gene:10747428"/>
<dbReference type="EnsemblBacteria" id="BAC08388">
    <property type="protein sequence ID" value="BAC08388"/>
    <property type="gene ID" value="BAC08388"/>
</dbReference>
<dbReference type="KEGG" id="tel:tsl0836"/>
<dbReference type="Proteomes" id="UP000000440">
    <property type="component" value="Chromosome"/>
</dbReference>
<dbReference type="GO" id="GO:0009523">
    <property type="term" value="C:photosystem II"/>
    <property type="evidence" value="ECO:0007669"/>
    <property type="project" value="UniProtKB-KW"/>
</dbReference>
<dbReference type="GO" id="GO:0031676">
    <property type="term" value="C:plasma membrane-derived thylakoid membrane"/>
    <property type="evidence" value="ECO:0007669"/>
    <property type="project" value="UniProtKB-SubCell"/>
</dbReference>
<dbReference type="GO" id="GO:0030145">
    <property type="term" value="F:manganese ion binding"/>
    <property type="evidence" value="ECO:0007669"/>
    <property type="project" value="InterPro"/>
</dbReference>
<dbReference type="GO" id="GO:0015979">
    <property type="term" value="P:photosynthesis"/>
    <property type="evidence" value="ECO:0007669"/>
    <property type="project" value="UniProtKB-UniRule"/>
</dbReference>
<dbReference type="HAMAP" id="MF_00717">
    <property type="entry name" value="PSII_PsbY"/>
    <property type="match status" value="1"/>
</dbReference>
<dbReference type="InterPro" id="IPR009388">
    <property type="entry name" value="PSII_PsbY"/>
</dbReference>
<dbReference type="NCBIfam" id="NF009711">
    <property type="entry name" value="PRK13240.1"/>
    <property type="match status" value="1"/>
</dbReference>
<dbReference type="Pfam" id="PF06298">
    <property type="entry name" value="PsbY"/>
    <property type="match status" value="1"/>
</dbReference>
<sequence length="41" mass="4585">MDWRVLVVLLPVLLAAGWAVRNILPYAVKQVQKLLQKAKAA</sequence>
<protein>
    <recommendedName>
        <fullName evidence="1">Photosystem II reaction center protein Y</fullName>
    </recommendedName>
</protein>
<organism>
    <name type="scientific">Thermosynechococcus vestitus (strain NIES-2133 / IAM M-273 / BP-1)</name>
    <dbReference type="NCBI Taxonomy" id="197221"/>
    <lineage>
        <taxon>Bacteria</taxon>
        <taxon>Bacillati</taxon>
        <taxon>Cyanobacteriota</taxon>
        <taxon>Cyanophyceae</taxon>
        <taxon>Acaryochloridales</taxon>
        <taxon>Thermosynechococcaceae</taxon>
        <taxon>Thermosynechococcus</taxon>
    </lineage>
</organism>
<feature type="chain" id="PRO_0000216895" description="Photosystem II reaction center protein Y">
    <location>
        <begin position="1"/>
        <end position="41"/>
    </location>
</feature>
<feature type="topological domain" description="Lumenal" evidence="4">
    <location>
        <begin position="1"/>
        <end position="4"/>
    </location>
</feature>
<feature type="transmembrane region" description="Helical" evidence="1">
    <location>
        <begin position="5"/>
        <end position="23"/>
    </location>
</feature>
<feature type="topological domain" description="Cytoplasmic" evidence="4">
    <location>
        <begin position="24"/>
        <end position="41"/>
    </location>
</feature>
<feature type="modified residue" description="N-formylmethionine" evidence="4 5">
    <location>
        <position position="1"/>
    </location>
</feature>
<feature type="helix" evidence="8">
    <location>
        <begin position="3"/>
        <end position="21"/>
    </location>
</feature>
<feature type="helix" evidence="8">
    <location>
        <begin position="24"/>
        <end position="33"/>
    </location>
</feature>
<keyword id="KW-0002">3D-structure</keyword>
<keyword id="KW-0903">Direct protein sequencing</keyword>
<keyword id="KW-0291">Formylation</keyword>
<keyword id="KW-0472">Membrane</keyword>
<keyword id="KW-0602">Photosynthesis</keyword>
<keyword id="KW-0604">Photosystem II</keyword>
<keyword id="KW-1185">Reference proteome</keyword>
<keyword id="KW-0793">Thylakoid</keyword>
<keyword id="KW-0812">Transmembrane</keyword>
<keyword id="KW-1133">Transmembrane helix</keyword>